<name>RR3_PANGI</name>
<keyword id="KW-0150">Chloroplast</keyword>
<keyword id="KW-0934">Plastid</keyword>
<keyword id="KW-0687">Ribonucleoprotein</keyword>
<keyword id="KW-0689">Ribosomal protein</keyword>
<keyword id="KW-0694">RNA-binding</keyword>
<keyword id="KW-0699">rRNA-binding</keyword>
<reference key="1">
    <citation type="journal article" date="2004" name="DNA Res.">
        <title>Complete chloroplast genome sequence from Korea ginseng (Panax schinseng Nees) and comparative analysis of sequence evolution among 17 vascular plants.</title>
        <authorList>
            <person name="Kim K.-J."/>
            <person name="Lee H.-L."/>
        </authorList>
    </citation>
    <scope>NUCLEOTIDE SEQUENCE [LARGE SCALE GENOMIC DNA]</scope>
</reference>
<dbReference type="EMBL" id="AY582139">
    <property type="protein sequence ID" value="AAT98547.1"/>
    <property type="molecule type" value="Genomic_DNA"/>
</dbReference>
<dbReference type="RefSeq" id="YP_087004.1">
    <property type="nucleotide sequence ID" value="NC_006290.1"/>
</dbReference>
<dbReference type="SMR" id="Q68RW8"/>
<dbReference type="GeneID" id="3021486"/>
<dbReference type="GO" id="GO:0009507">
    <property type="term" value="C:chloroplast"/>
    <property type="evidence" value="ECO:0007669"/>
    <property type="project" value="UniProtKB-SubCell"/>
</dbReference>
<dbReference type="GO" id="GO:0022627">
    <property type="term" value="C:cytosolic small ribosomal subunit"/>
    <property type="evidence" value="ECO:0007669"/>
    <property type="project" value="TreeGrafter"/>
</dbReference>
<dbReference type="GO" id="GO:0019843">
    <property type="term" value="F:rRNA binding"/>
    <property type="evidence" value="ECO:0007669"/>
    <property type="project" value="UniProtKB-UniRule"/>
</dbReference>
<dbReference type="GO" id="GO:0003735">
    <property type="term" value="F:structural constituent of ribosome"/>
    <property type="evidence" value="ECO:0007669"/>
    <property type="project" value="InterPro"/>
</dbReference>
<dbReference type="GO" id="GO:0006412">
    <property type="term" value="P:translation"/>
    <property type="evidence" value="ECO:0007669"/>
    <property type="project" value="UniProtKB-UniRule"/>
</dbReference>
<dbReference type="CDD" id="cd02412">
    <property type="entry name" value="KH-II_30S_S3"/>
    <property type="match status" value="1"/>
</dbReference>
<dbReference type="FunFam" id="3.30.1140.32:FF:000003">
    <property type="entry name" value="30S ribosomal protein S3, chloroplastic"/>
    <property type="match status" value="1"/>
</dbReference>
<dbReference type="FunFam" id="3.30.300.20:FF:000008">
    <property type="entry name" value="30S ribosomal protein S3, chloroplastic"/>
    <property type="match status" value="1"/>
</dbReference>
<dbReference type="Gene3D" id="3.30.300.20">
    <property type="match status" value="1"/>
</dbReference>
<dbReference type="Gene3D" id="3.30.1140.32">
    <property type="entry name" value="Ribosomal protein S3, C-terminal domain"/>
    <property type="match status" value="1"/>
</dbReference>
<dbReference type="HAMAP" id="MF_01309_B">
    <property type="entry name" value="Ribosomal_uS3_B"/>
    <property type="match status" value="1"/>
</dbReference>
<dbReference type="InterPro" id="IPR015946">
    <property type="entry name" value="KH_dom-like_a/b"/>
</dbReference>
<dbReference type="InterPro" id="IPR004044">
    <property type="entry name" value="KH_dom_type_2"/>
</dbReference>
<dbReference type="InterPro" id="IPR009019">
    <property type="entry name" value="KH_sf_prok-type"/>
</dbReference>
<dbReference type="InterPro" id="IPR036419">
    <property type="entry name" value="Ribosomal_S3_C_sf"/>
</dbReference>
<dbReference type="InterPro" id="IPR005704">
    <property type="entry name" value="Ribosomal_uS3_bac-typ"/>
</dbReference>
<dbReference type="InterPro" id="IPR001351">
    <property type="entry name" value="Ribosomal_uS3_C"/>
</dbReference>
<dbReference type="InterPro" id="IPR018280">
    <property type="entry name" value="Ribosomal_uS3_CS"/>
</dbReference>
<dbReference type="NCBIfam" id="TIGR01009">
    <property type="entry name" value="rpsC_bact"/>
    <property type="match status" value="1"/>
</dbReference>
<dbReference type="PANTHER" id="PTHR11760">
    <property type="entry name" value="30S/40S RIBOSOMAL PROTEIN S3"/>
    <property type="match status" value="1"/>
</dbReference>
<dbReference type="PANTHER" id="PTHR11760:SF19">
    <property type="entry name" value="SMALL RIBOSOMAL SUBUNIT PROTEIN US3C"/>
    <property type="match status" value="1"/>
</dbReference>
<dbReference type="Pfam" id="PF00189">
    <property type="entry name" value="Ribosomal_S3_C"/>
    <property type="match status" value="1"/>
</dbReference>
<dbReference type="SUPFAM" id="SSF54814">
    <property type="entry name" value="Prokaryotic type KH domain (KH-domain type II)"/>
    <property type="match status" value="1"/>
</dbReference>
<dbReference type="SUPFAM" id="SSF54821">
    <property type="entry name" value="Ribosomal protein S3 C-terminal domain"/>
    <property type="match status" value="1"/>
</dbReference>
<dbReference type="PROSITE" id="PS50823">
    <property type="entry name" value="KH_TYPE_2"/>
    <property type="match status" value="1"/>
</dbReference>
<dbReference type="PROSITE" id="PS00548">
    <property type="entry name" value="RIBOSOMAL_S3"/>
    <property type="match status" value="1"/>
</dbReference>
<accession>Q68RW8</accession>
<organism>
    <name type="scientific">Panax ginseng</name>
    <name type="common">Korean ginseng</name>
    <dbReference type="NCBI Taxonomy" id="4054"/>
    <lineage>
        <taxon>Eukaryota</taxon>
        <taxon>Viridiplantae</taxon>
        <taxon>Streptophyta</taxon>
        <taxon>Embryophyta</taxon>
        <taxon>Tracheophyta</taxon>
        <taxon>Spermatophyta</taxon>
        <taxon>Magnoliopsida</taxon>
        <taxon>eudicotyledons</taxon>
        <taxon>Gunneridae</taxon>
        <taxon>Pentapetalae</taxon>
        <taxon>asterids</taxon>
        <taxon>campanulids</taxon>
        <taxon>Apiales</taxon>
        <taxon>Araliaceae</taxon>
        <taxon>Panax</taxon>
    </lineage>
</organism>
<gene>
    <name type="primary">rps3</name>
    <name type="ORF">PSC0846</name>
</gene>
<geneLocation type="chloroplast"/>
<evidence type="ECO:0000250" key="1"/>
<evidence type="ECO:0000305" key="2"/>
<feature type="chain" id="PRO_0000130296" description="Small ribosomal subunit protein uS3c">
    <location>
        <begin position="1"/>
        <end position="219"/>
    </location>
</feature>
<feature type="domain" description="KH type-2">
    <location>
        <begin position="43"/>
        <end position="118"/>
    </location>
</feature>
<protein>
    <recommendedName>
        <fullName evidence="2">Small ribosomal subunit protein uS3c</fullName>
    </recommendedName>
    <alternativeName>
        <fullName>30S ribosomal protein S3, chloroplastic</fullName>
    </alternativeName>
</protein>
<comment type="subunit">
    <text evidence="1">Part of the 30S ribosomal subunit.</text>
</comment>
<comment type="subcellular location">
    <subcellularLocation>
        <location>Plastid</location>
        <location>Chloroplast</location>
    </subcellularLocation>
</comment>
<comment type="similarity">
    <text evidence="2">Belongs to the universal ribosomal protein uS3 family.</text>
</comment>
<sequence>MGQKINPLGFRLGTTQGHHSLWFAQPKNYSEGLQEDQKIRDFIKNYVQKNMKISSSVEGIARIEIQKRIDLIQVIIYMGFPKLLIESRPRGIEELQMNLQKEFKSVNQKLNIAITRIAKPYGSPNILAEFIAGQLKNRVSFRKAMKKAIELTEQADTKGIQVQIAGRIDGKEIARVEWIREGRVPLQTIRAKIDYCSYTVRTIYGVLGIKIWIFIDGEE</sequence>
<proteinExistence type="inferred from homology"/>